<gene>
    <name evidence="1" type="primary">rsmH</name>
    <name type="synonym">mraW</name>
    <name type="ordered locus">mma_3023</name>
</gene>
<dbReference type="EC" id="2.1.1.199" evidence="1"/>
<dbReference type="EMBL" id="CP000269">
    <property type="protein sequence ID" value="ABR88828.1"/>
    <property type="molecule type" value="Genomic_DNA"/>
</dbReference>
<dbReference type="RefSeq" id="WP_012080872.1">
    <property type="nucleotide sequence ID" value="NC_009659.1"/>
</dbReference>
<dbReference type="SMR" id="A6T2G6"/>
<dbReference type="STRING" id="375286.mma_3023"/>
<dbReference type="KEGG" id="mms:mma_3023"/>
<dbReference type="eggNOG" id="COG0275">
    <property type="taxonomic scope" value="Bacteria"/>
</dbReference>
<dbReference type="HOGENOM" id="CLU_038422_2_0_4"/>
<dbReference type="OrthoDB" id="9806637at2"/>
<dbReference type="Proteomes" id="UP000006388">
    <property type="component" value="Chromosome"/>
</dbReference>
<dbReference type="GO" id="GO:0005737">
    <property type="term" value="C:cytoplasm"/>
    <property type="evidence" value="ECO:0007669"/>
    <property type="project" value="UniProtKB-SubCell"/>
</dbReference>
<dbReference type="GO" id="GO:0071424">
    <property type="term" value="F:rRNA (cytosine-N4-)-methyltransferase activity"/>
    <property type="evidence" value="ECO:0007669"/>
    <property type="project" value="UniProtKB-UniRule"/>
</dbReference>
<dbReference type="GO" id="GO:0070475">
    <property type="term" value="P:rRNA base methylation"/>
    <property type="evidence" value="ECO:0007669"/>
    <property type="project" value="UniProtKB-UniRule"/>
</dbReference>
<dbReference type="FunFam" id="1.10.150.170:FF:000001">
    <property type="entry name" value="Ribosomal RNA small subunit methyltransferase H"/>
    <property type="match status" value="1"/>
</dbReference>
<dbReference type="Gene3D" id="1.10.150.170">
    <property type="entry name" value="Putative methyltransferase TM0872, insert domain"/>
    <property type="match status" value="1"/>
</dbReference>
<dbReference type="Gene3D" id="3.40.50.150">
    <property type="entry name" value="Vaccinia Virus protein VP39"/>
    <property type="match status" value="1"/>
</dbReference>
<dbReference type="HAMAP" id="MF_01007">
    <property type="entry name" value="16SrRNA_methyltr_H"/>
    <property type="match status" value="1"/>
</dbReference>
<dbReference type="InterPro" id="IPR002903">
    <property type="entry name" value="RsmH"/>
</dbReference>
<dbReference type="InterPro" id="IPR023397">
    <property type="entry name" value="SAM-dep_MeTrfase_MraW_recog"/>
</dbReference>
<dbReference type="InterPro" id="IPR029063">
    <property type="entry name" value="SAM-dependent_MTases_sf"/>
</dbReference>
<dbReference type="NCBIfam" id="TIGR00006">
    <property type="entry name" value="16S rRNA (cytosine(1402)-N(4))-methyltransferase RsmH"/>
    <property type="match status" value="1"/>
</dbReference>
<dbReference type="PANTHER" id="PTHR11265:SF0">
    <property type="entry name" value="12S RRNA N4-METHYLCYTIDINE METHYLTRANSFERASE"/>
    <property type="match status" value="1"/>
</dbReference>
<dbReference type="PANTHER" id="PTHR11265">
    <property type="entry name" value="S-ADENOSYL-METHYLTRANSFERASE MRAW"/>
    <property type="match status" value="1"/>
</dbReference>
<dbReference type="Pfam" id="PF01795">
    <property type="entry name" value="Methyltransf_5"/>
    <property type="match status" value="1"/>
</dbReference>
<dbReference type="PIRSF" id="PIRSF004486">
    <property type="entry name" value="MraW"/>
    <property type="match status" value="1"/>
</dbReference>
<dbReference type="SUPFAM" id="SSF81799">
    <property type="entry name" value="Putative methyltransferase TM0872, insert domain"/>
    <property type="match status" value="1"/>
</dbReference>
<dbReference type="SUPFAM" id="SSF53335">
    <property type="entry name" value="S-adenosyl-L-methionine-dependent methyltransferases"/>
    <property type="match status" value="1"/>
</dbReference>
<organism>
    <name type="scientific">Janthinobacterium sp. (strain Marseille)</name>
    <name type="common">Minibacterium massiliensis</name>
    <dbReference type="NCBI Taxonomy" id="375286"/>
    <lineage>
        <taxon>Bacteria</taxon>
        <taxon>Pseudomonadati</taxon>
        <taxon>Pseudomonadota</taxon>
        <taxon>Betaproteobacteria</taxon>
        <taxon>Burkholderiales</taxon>
        <taxon>Oxalobacteraceae</taxon>
        <taxon>Janthinobacterium</taxon>
    </lineage>
</organism>
<protein>
    <recommendedName>
        <fullName evidence="1">Ribosomal RNA small subunit methyltransferase H</fullName>
        <ecNumber evidence="1">2.1.1.199</ecNumber>
    </recommendedName>
    <alternativeName>
        <fullName evidence="1">16S rRNA m(4)C1402 methyltransferase</fullName>
    </alternativeName>
    <alternativeName>
        <fullName evidence="1">rRNA (cytosine-N(4)-)-methyltransferase RsmH</fullName>
    </alternativeName>
</protein>
<reference key="1">
    <citation type="journal article" date="2007" name="PLoS Genet.">
        <title>Genome analysis of Minibacterium massiliensis highlights the convergent evolution of water-living bacteria.</title>
        <authorList>
            <person name="Audic S."/>
            <person name="Robert C."/>
            <person name="Campagna B."/>
            <person name="Parinello H."/>
            <person name="Claverie J.-M."/>
            <person name="Raoult D."/>
            <person name="Drancourt M."/>
        </authorList>
    </citation>
    <scope>NUCLEOTIDE SEQUENCE [LARGE SCALE GENOMIC DNA]</scope>
    <source>
        <strain>Marseille</strain>
    </source>
</reference>
<feature type="chain" id="PRO_0000386933" description="Ribosomal RNA small subunit methyltransferase H">
    <location>
        <begin position="1"/>
        <end position="322"/>
    </location>
</feature>
<feature type="binding site" evidence="1">
    <location>
        <begin position="42"/>
        <end position="44"/>
    </location>
    <ligand>
        <name>S-adenosyl-L-methionine</name>
        <dbReference type="ChEBI" id="CHEBI:59789"/>
    </ligand>
</feature>
<feature type="binding site" evidence="1">
    <location>
        <position position="62"/>
    </location>
    <ligand>
        <name>S-adenosyl-L-methionine</name>
        <dbReference type="ChEBI" id="CHEBI:59789"/>
    </ligand>
</feature>
<feature type="binding site" evidence="1">
    <location>
        <position position="86"/>
    </location>
    <ligand>
        <name>S-adenosyl-L-methionine</name>
        <dbReference type="ChEBI" id="CHEBI:59789"/>
    </ligand>
</feature>
<feature type="binding site" evidence="1">
    <location>
        <position position="107"/>
    </location>
    <ligand>
        <name>S-adenosyl-L-methionine</name>
        <dbReference type="ChEBI" id="CHEBI:59789"/>
    </ligand>
</feature>
<feature type="binding site" evidence="1">
    <location>
        <position position="114"/>
    </location>
    <ligand>
        <name>S-adenosyl-L-methionine</name>
        <dbReference type="ChEBI" id="CHEBI:59789"/>
    </ligand>
</feature>
<proteinExistence type="inferred from homology"/>
<comment type="function">
    <text evidence="1">Specifically methylates the N4 position of cytidine in position 1402 (C1402) of 16S rRNA.</text>
</comment>
<comment type="catalytic activity">
    <reaction evidence="1">
        <text>cytidine(1402) in 16S rRNA + S-adenosyl-L-methionine = N(4)-methylcytidine(1402) in 16S rRNA + S-adenosyl-L-homocysteine + H(+)</text>
        <dbReference type="Rhea" id="RHEA:42928"/>
        <dbReference type="Rhea" id="RHEA-COMP:10286"/>
        <dbReference type="Rhea" id="RHEA-COMP:10287"/>
        <dbReference type="ChEBI" id="CHEBI:15378"/>
        <dbReference type="ChEBI" id="CHEBI:57856"/>
        <dbReference type="ChEBI" id="CHEBI:59789"/>
        <dbReference type="ChEBI" id="CHEBI:74506"/>
        <dbReference type="ChEBI" id="CHEBI:82748"/>
        <dbReference type="EC" id="2.1.1.199"/>
    </reaction>
</comment>
<comment type="subcellular location">
    <subcellularLocation>
        <location evidence="1">Cytoplasm</location>
    </subcellularLocation>
</comment>
<comment type="similarity">
    <text evidence="1">Belongs to the methyltransferase superfamily. RsmH family.</text>
</comment>
<sequence>MNADAVQQYQHRTVLLDEAVDALALGGERANGVYVDGTFGRGGHSRKILQQLGSGARLLAFDKDTQAIANAATIDDQRFEIAHDSFATLSEALAVRGIKQVDGVLLDLGISSPQVDDATRGFSFRADGPLDMRMDTTRGMSAAEWLATETEQKIEKVIREYGEERFAFQIAKAIVARRAVEPISSTRQLAEIVARTVKTREKGKDPATRTFQAIRIFINQELEELEVVLNEAYRYLAPHGRLVVISFHSLEDRIVKQFMAGKANVPQPDRRLPIRAIDLPQPEMKLLSRVKPSAAEISENPRARSAVMRVAERLSPAARVVQ</sequence>
<accession>A6T2G6</accession>
<name>RSMH_JANMA</name>
<keyword id="KW-0963">Cytoplasm</keyword>
<keyword id="KW-0489">Methyltransferase</keyword>
<keyword id="KW-0698">rRNA processing</keyword>
<keyword id="KW-0949">S-adenosyl-L-methionine</keyword>
<keyword id="KW-0808">Transferase</keyword>
<evidence type="ECO:0000255" key="1">
    <source>
        <dbReference type="HAMAP-Rule" id="MF_01007"/>
    </source>
</evidence>